<proteinExistence type="inferred from homology"/>
<sequence>MVKVEIDEGSGFCFGVVTAIHKAEEELAKGVTLYCLGDIVHNSREVERLKEMGLITINHEEFKQLHNAKVLLRAHGEPPETYIIAKENNIEIIDATCPVVLRLQKRIKQEYMQEDLDEKQIVIYGKNGHAEVLGLVGQTTGKAIVIEKLDEARRLDFSKSIRLYSQTTKSLDEFWEIVEYIKEHISPDVTFEYYDTICRQVANRMPNLRKFAASHDLIFFVSGKKSSNGKMLFEECKKVNPNSHLIDSADEIDDSLLPGVNSIGVCGATSTPKWLMEEISEAIKAQIKRQ</sequence>
<name>ISPH_BACFN</name>
<feature type="chain" id="PRO_1000021088" description="4-hydroxy-3-methylbut-2-enyl diphosphate reductase">
    <location>
        <begin position="1"/>
        <end position="290"/>
    </location>
</feature>
<feature type="active site" description="Proton donor" evidence="1">
    <location>
        <position position="131"/>
    </location>
</feature>
<feature type="binding site" evidence="1">
    <location>
        <position position="13"/>
    </location>
    <ligand>
        <name>[4Fe-4S] cluster</name>
        <dbReference type="ChEBI" id="CHEBI:49883"/>
    </ligand>
</feature>
<feature type="binding site" evidence="1">
    <location>
        <position position="41"/>
    </location>
    <ligand>
        <name>(2E)-4-hydroxy-3-methylbut-2-enyl diphosphate</name>
        <dbReference type="ChEBI" id="CHEBI:128753"/>
    </ligand>
</feature>
<feature type="binding site" evidence="1">
    <location>
        <position position="41"/>
    </location>
    <ligand>
        <name>dimethylallyl diphosphate</name>
        <dbReference type="ChEBI" id="CHEBI:57623"/>
    </ligand>
</feature>
<feature type="binding site" evidence="1">
    <location>
        <position position="41"/>
    </location>
    <ligand>
        <name>isopentenyl diphosphate</name>
        <dbReference type="ChEBI" id="CHEBI:128769"/>
    </ligand>
</feature>
<feature type="binding site" evidence="1">
    <location>
        <position position="75"/>
    </location>
    <ligand>
        <name>(2E)-4-hydroxy-3-methylbut-2-enyl diphosphate</name>
        <dbReference type="ChEBI" id="CHEBI:128753"/>
    </ligand>
</feature>
<feature type="binding site" evidence="1">
    <location>
        <position position="75"/>
    </location>
    <ligand>
        <name>dimethylallyl diphosphate</name>
        <dbReference type="ChEBI" id="CHEBI:57623"/>
    </ligand>
</feature>
<feature type="binding site" evidence="1">
    <location>
        <position position="75"/>
    </location>
    <ligand>
        <name>isopentenyl diphosphate</name>
        <dbReference type="ChEBI" id="CHEBI:128769"/>
    </ligand>
</feature>
<feature type="binding site" evidence="1">
    <location>
        <position position="97"/>
    </location>
    <ligand>
        <name>[4Fe-4S] cluster</name>
        <dbReference type="ChEBI" id="CHEBI:49883"/>
    </ligand>
</feature>
<feature type="binding site" evidence="1">
    <location>
        <position position="129"/>
    </location>
    <ligand>
        <name>(2E)-4-hydroxy-3-methylbut-2-enyl diphosphate</name>
        <dbReference type="ChEBI" id="CHEBI:128753"/>
    </ligand>
</feature>
<feature type="binding site" evidence="1">
    <location>
        <position position="129"/>
    </location>
    <ligand>
        <name>dimethylallyl diphosphate</name>
        <dbReference type="ChEBI" id="CHEBI:57623"/>
    </ligand>
</feature>
<feature type="binding site" evidence="1">
    <location>
        <position position="129"/>
    </location>
    <ligand>
        <name>isopentenyl diphosphate</name>
        <dbReference type="ChEBI" id="CHEBI:128769"/>
    </ligand>
</feature>
<feature type="binding site" evidence="1">
    <location>
        <position position="167"/>
    </location>
    <ligand>
        <name>(2E)-4-hydroxy-3-methylbut-2-enyl diphosphate</name>
        <dbReference type="ChEBI" id="CHEBI:128753"/>
    </ligand>
</feature>
<feature type="binding site" evidence="1">
    <location>
        <position position="198"/>
    </location>
    <ligand>
        <name>[4Fe-4S] cluster</name>
        <dbReference type="ChEBI" id="CHEBI:49883"/>
    </ligand>
</feature>
<feature type="binding site" evidence="1">
    <location>
        <position position="226"/>
    </location>
    <ligand>
        <name>(2E)-4-hydroxy-3-methylbut-2-enyl diphosphate</name>
        <dbReference type="ChEBI" id="CHEBI:128753"/>
    </ligand>
</feature>
<feature type="binding site" evidence="1">
    <location>
        <position position="226"/>
    </location>
    <ligand>
        <name>dimethylallyl diphosphate</name>
        <dbReference type="ChEBI" id="CHEBI:57623"/>
    </ligand>
</feature>
<feature type="binding site" evidence="1">
    <location>
        <position position="226"/>
    </location>
    <ligand>
        <name>isopentenyl diphosphate</name>
        <dbReference type="ChEBI" id="CHEBI:128769"/>
    </ligand>
</feature>
<feature type="binding site" evidence="1">
    <location>
        <position position="227"/>
    </location>
    <ligand>
        <name>(2E)-4-hydroxy-3-methylbut-2-enyl diphosphate</name>
        <dbReference type="ChEBI" id="CHEBI:128753"/>
    </ligand>
</feature>
<feature type="binding site" evidence="1">
    <location>
        <position position="227"/>
    </location>
    <ligand>
        <name>dimethylallyl diphosphate</name>
        <dbReference type="ChEBI" id="CHEBI:57623"/>
    </ligand>
</feature>
<feature type="binding site" evidence="1">
    <location>
        <position position="227"/>
    </location>
    <ligand>
        <name>isopentenyl diphosphate</name>
        <dbReference type="ChEBI" id="CHEBI:128769"/>
    </ligand>
</feature>
<feature type="binding site" evidence="1">
    <location>
        <position position="228"/>
    </location>
    <ligand>
        <name>(2E)-4-hydroxy-3-methylbut-2-enyl diphosphate</name>
        <dbReference type="ChEBI" id="CHEBI:128753"/>
    </ligand>
</feature>
<feature type="binding site" evidence="1">
    <location>
        <position position="228"/>
    </location>
    <ligand>
        <name>dimethylallyl diphosphate</name>
        <dbReference type="ChEBI" id="CHEBI:57623"/>
    </ligand>
</feature>
<feature type="binding site" evidence="1">
    <location>
        <position position="228"/>
    </location>
    <ligand>
        <name>isopentenyl diphosphate</name>
        <dbReference type="ChEBI" id="CHEBI:128769"/>
    </ligand>
</feature>
<feature type="binding site" evidence="1">
    <location>
        <position position="270"/>
    </location>
    <ligand>
        <name>(2E)-4-hydroxy-3-methylbut-2-enyl diphosphate</name>
        <dbReference type="ChEBI" id="CHEBI:128753"/>
    </ligand>
</feature>
<feature type="binding site" evidence="1">
    <location>
        <position position="270"/>
    </location>
    <ligand>
        <name>dimethylallyl diphosphate</name>
        <dbReference type="ChEBI" id="CHEBI:57623"/>
    </ligand>
</feature>
<feature type="binding site" evidence="1">
    <location>
        <position position="270"/>
    </location>
    <ligand>
        <name>isopentenyl diphosphate</name>
        <dbReference type="ChEBI" id="CHEBI:128769"/>
    </ligand>
</feature>
<comment type="function">
    <text evidence="1">Catalyzes the conversion of 1-hydroxy-2-methyl-2-(E)-butenyl 4-diphosphate (HMBPP) into a mixture of isopentenyl diphosphate (IPP) and dimethylallyl diphosphate (DMAPP). Acts in the terminal step of the DOXP/MEP pathway for isoprenoid precursor biosynthesis.</text>
</comment>
<comment type="catalytic activity">
    <reaction evidence="1">
        <text>isopentenyl diphosphate + 2 oxidized [2Fe-2S]-[ferredoxin] + H2O = (2E)-4-hydroxy-3-methylbut-2-enyl diphosphate + 2 reduced [2Fe-2S]-[ferredoxin] + 2 H(+)</text>
        <dbReference type="Rhea" id="RHEA:24488"/>
        <dbReference type="Rhea" id="RHEA-COMP:10000"/>
        <dbReference type="Rhea" id="RHEA-COMP:10001"/>
        <dbReference type="ChEBI" id="CHEBI:15377"/>
        <dbReference type="ChEBI" id="CHEBI:15378"/>
        <dbReference type="ChEBI" id="CHEBI:33737"/>
        <dbReference type="ChEBI" id="CHEBI:33738"/>
        <dbReference type="ChEBI" id="CHEBI:128753"/>
        <dbReference type="ChEBI" id="CHEBI:128769"/>
        <dbReference type="EC" id="1.17.7.4"/>
    </reaction>
</comment>
<comment type="catalytic activity">
    <reaction evidence="1">
        <text>dimethylallyl diphosphate + 2 oxidized [2Fe-2S]-[ferredoxin] + H2O = (2E)-4-hydroxy-3-methylbut-2-enyl diphosphate + 2 reduced [2Fe-2S]-[ferredoxin] + 2 H(+)</text>
        <dbReference type="Rhea" id="RHEA:24825"/>
        <dbReference type="Rhea" id="RHEA-COMP:10000"/>
        <dbReference type="Rhea" id="RHEA-COMP:10001"/>
        <dbReference type="ChEBI" id="CHEBI:15377"/>
        <dbReference type="ChEBI" id="CHEBI:15378"/>
        <dbReference type="ChEBI" id="CHEBI:33737"/>
        <dbReference type="ChEBI" id="CHEBI:33738"/>
        <dbReference type="ChEBI" id="CHEBI:57623"/>
        <dbReference type="ChEBI" id="CHEBI:128753"/>
        <dbReference type="EC" id="1.17.7.4"/>
    </reaction>
</comment>
<comment type="cofactor">
    <cofactor evidence="1">
        <name>[4Fe-4S] cluster</name>
        <dbReference type="ChEBI" id="CHEBI:49883"/>
    </cofactor>
    <text evidence="1">Binds 1 [4Fe-4S] cluster per subunit.</text>
</comment>
<comment type="pathway">
    <text evidence="1">Isoprenoid biosynthesis; dimethylallyl diphosphate biosynthesis; dimethylallyl diphosphate from (2E)-4-hydroxy-3-methylbutenyl diphosphate: step 1/1.</text>
</comment>
<comment type="pathway">
    <text evidence="1">Isoprenoid biosynthesis; isopentenyl diphosphate biosynthesis via DXP pathway; isopentenyl diphosphate from 1-deoxy-D-xylulose 5-phosphate: step 6/6.</text>
</comment>
<comment type="similarity">
    <text evidence="1">Belongs to the IspH family.</text>
</comment>
<dbReference type="EC" id="1.17.7.4" evidence="1"/>
<dbReference type="EMBL" id="CR626927">
    <property type="protein sequence ID" value="CAH09224.1"/>
    <property type="molecule type" value="Genomic_DNA"/>
</dbReference>
<dbReference type="RefSeq" id="WP_005797949.1">
    <property type="nucleotide sequence ID" value="NZ_UFTH01000001.1"/>
</dbReference>
<dbReference type="SMR" id="Q5L9K3"/>
<dbReference type="PaxDb" id="272559-BF9343_3443"/>
<dbReference type="DNASU" id="3286026"/>
<dbReference type="KEGG" id="bfs:BF9343_3443"/>
<dbReference type="eggNOG" id="COG0761">
    <property type="taxonomic scope" value="Bacteria"/>
</dbReference>
<dbReference type="HOGENOM" id="CLU_027486_0_1_10"/>
<dbReference type="UniPathway" id="UPA00056">
    <property type="reaction ID" value="UER00097"/>
</dbReference>
<dbReference type="UniPathway" id="UPA00059">
    <property type="reaction ID" value="UER00105"/>
</dbReference>
<dbReference type="Proteomes" id="UP000006731">
    <property type="component" value="Chromosome"/>
</dbReference>
<dbReference type="GO" id="GO:0051539">
    <property type="term" value="F:4 iron, 4 sulfur cluster binding"/>
    <property type="evidence" value="ECO:0007669"/>
    <property type="project" value="UniProtKB-UniRule"/>
</dbReference>
<dbReference type="GO" id="GO:0051745">
    <property type="term" value="F:4-hydroxy-3-methylbut-2-enyl diphosphate reductase activity"/>
    <property type="evidence" value="ECO:0007669"/>
    <property type="project" value="UniProtKB-UniRule"/>
</dbReference>
<dbReference type="GO" id="GO:0046872">
    <property type="term" value="F:metal ion binding"/>
    <property type="evidence" value="ECO:0007669"/>
    <property type="project" value="UniProtKB-KW"/>
</dbReference>
<dbReference type="GO" id="GO:0050992">
    <property type="term" value="P:dimethylallyl diphosphate biosynthetic process"/>
    <property type="evidence" value="ECO:0007669"/>
    <property type="project" value="UniProtKB-UniRule"/>
</dbReference>
<dbReference type="GO" id="GO:0019288">
    <property type="term" value="P:isopentenyl diphosphate biosynthetic process, methylerythritol 4-phosphate pathway"/>
    <property type="evidence" value="ECO:0007669"/>
    <property type="project" value="UniProtKB-UniRule"/>
</dbReference>
<dbReference type="GO" id="GO:0016114">
    <property type="term" value="P:terpenoid biosynthetic process"/>
    <property type="evidence" value="ECO:0007669"/>
    <property type="project" value="UniProtKB-UniRule"/>
</dbReference>
<dbReference type="CDD" id="cd13944">
    <property type="entry name" value="lytB_ispH"/>
    <property type="match status" value="1"/>
</dbReference>
<dbReference type="Gene3D" id="3.40.50.11270">
    <property type="match status" value="1"/>
</dbReference>
<dbReference type="Gene3D" id="3.40.1010.20">
    <property type="entry name" value="4-hydroxy-3-methylbut-2-enyl diphosphate reductase, catalytic domain"/>
    <property type="match status" value="2"/>
</dbReference>
<dbReference type="HAMAP" id="MF_00191">
    <property type="entry name" value="IspH"/>
    <property type="match status" value="1"/>
</dbReference>
<dbReference type="InterPro" id="IPR003451">
    <property type="entry name" value="LytB/IspH"/>
</dbReference>
<dbReference type="NCBIfam" id="TIGR00216">
    <property type="entry name" value="ispH_lytB"/>
    <property type="match status" value="1"/>
</dbReference>
<dbReference type="NCBIfam" id="NF002187">
    <property type="entry name" value="PRK01045.1-1"/>
    <property type="match status" value="1"/>
</dbReference>
<dbReference type="PANTHER" id="PTHR30426">
    <property type="entry name" value="4-HYDROXY-3-METHYLBUT-2-ENYL DIPHOSPHATE REDUCTASE"/>
    <property type="match status" value="1"/>
</dbReference>
<dbReference type="PANTHER" id="PTHR30426:SF0">
    <property type="entry name" value="4-HYDROXY-3-METHYLBUT-2-ENYL DIPHOSPHATE REDUCTASE"/>
    <property type="match status" value="1"/>
</dbReference>
<dbReference type="Pfam" id="PF02401">
    <property type="entry name" value="LYTB"/>
    <property type="match status" value="1"/>
</dbReference>
<evidence type="ECO:0000255" key="1">
    <source>
        <dbReference type="HAMAP-Rule" id="MF_00191"/>
    </source>
</evidence>
<reference key="1">
    <citation type="journal article" date="2005" name="Science">
        <title>Extensive DNA inversions in the B. fragilis genome control variable gene expression.</title>
        <authorList>
            <person name="Cerdeno-Tarraga A.-M."/>
            <person name="Patrick S."/>
            <person name="Crossman L.C."/>
            <person name="Blakely G."/>
            <person name="Abratt V."/>
            <person name="Lennard N."/>
            <person name="Poxton I."/>
            <person name="Duerden B."/>
            <person name="Harris B."/>
            <person name="Quail M.A."/>
            <person name="Barron A."/>
            <person name="Clark L."/>
            <person name="Corton C."/>
            <person name="Doggett J."/>
            <person name="Holden M.T.G."/>
            <person name="Larke N."/>
            <person name="Line A."/>
            <person name="Lord A."/>
            <person name="Norbertczak H."/>
            <person name="Ormond D."/>
            <person name="Price C."/>
            <person name="Rabbinowitsch E."/>
            <person name="Woodward J."/>
            <person name="Barrell B.G."/>
            <person name="Parkhill J."/>
        </authorList>
    </citation>
    <scope>NUCLEOTIDE SEQUENCE [LARGE SCALE GENOMIC DNA]</scope>
    <source>
        <strain>ATCC 25285 / DSM 2151 / CCUG 4856 / JCM 11019 / LMG 10263 / NCTC 9343 / Onslow / VPI 2553 / EN-2</strain>
    </source>
</reference>
<gene>
    <name evidence="1" type="primary">ispH</name>
    <name type="ordered locus">BF3536</name>
</gene>
<organism>
    <name type="scientific">Bacteroides fragilis (strain ATCC 25285 / DSM 2151 / CCUG 4856 / JCM 11019 / LMG 10263 / NCTC 9343 / Onslow / VPI 2553 / EN-2)</name>
    <dbReference type="NCBI Taxonomy" id="272559"/>
    <lineage>
        <taxon>Bacteria</taxon>
        <taxon>Pseudomonadati</taxon>
        <taxon>Bacteroidota</taxon>
        <taxon>Bacteroidia</taxon>
        <taxon>Bacteroidales</taxon>
        <taxon>Bacteroidaceae</taxon>
        <taxon>Bacteroides</taxon>
    </lineage>
</organism>
<protein>
    <recommendedName>
        <fullName evidence="1">4-hydroxy-3-methylbut-2-enyl diphosphate reductase</fullName>
        <shortName evidence="1">HMBPP reductase</shortName>
        <ecNumber evidence="1">1.17.7.4</ecNumber>
    </recommendedName>
</protein>
<accession>Q5L9K3</accession>
<keyword id="KW-0004">4Fe-4S</keyword>
<keyword id="KW-0408">Iron</keyword>
<keyword id="KW-0411">Iron-sulfur</keyword>
<keyword id="KW-0414">Isoprene biosynthesis</keyword>
<keyword id="KW-0479">Metal-binding</keyword>
<keyword id="KW-0560">Oxidoreductase</keyword>